<evidence type="ECO:0000255" key="1">
    <source>
        <dbReference type="HAMAP-Rule" id="MF_00172"/>
    </source>
</evidence>
<protein>
    <recommendedName>
        <fullName evidence="1">5-methyltetrahydropteroyltriglutamate--homocysteine methyltransferase</fullName>
        <ecNumber evidence="1">2.1.1.14</ecNumber>
    </recommendedName>
    <alternativeName>
        <fullName evidence="1">Cobalamin-independent methionine synthase</fullName>
    </alternativeName>
    <alternativeName>
        <fullName evidence="1">Methionine synthase, vitamin-B12 independent isozyme</fullName>
    </alternativeName>
</protein>
<dbReference type="EC" id="2.1.1.14" evidence="1"/>
<dbReference type="EMBL" id="CU928160">
    <property type="protein sequence ID" value="CAR00805.1"/>
    <property type="molecule type" value="Genomic_DNA"/>
</dbReference>
<dbReference type="RefSeq" id="WP_000153979.1">
    <property type="nucleotide sequence ID" value="NC_011741.1"/>
</dbReference>
<dbReference type="SMR" id="B7M634"/>
<dbReference type="KEGG" id="ecr:ECIAI1_4024"/>
<dbReference type="HOGENOM" id="CLU_013175_0_0_6"/>
<dbReference type="UniPathway" id="UPA00051">
    <property type="reaction ID" value="UER00082"/>
</dbReference>
<dbReference type="GO" id="GO:0003871">
    <property type="term" value="F:5-methyltetrahydropteroyltriglutamate-homocysteine S-methyltransferase activity"/>
    <property type="evidence" value="ECO:0007669"/>
    <property type="project" value="UniProtKB-UniRule"/>
</dbReference>
<dbReference type="GO" id="GO:0008270">
    <property type="term" value="F:zinc ion binding"/>
    <property type="evidence" value="ECO:0007669"/>
    <property type="project" value="InterPro"/>
</dbReference>
<dbReference type="GO" id="GO:0009086">
    <property type="term" value="P:methionine biosynthetic process"/>
    <property type="evidence" value="ECO:0007669"/>
    <property type="project" value="UniProtKB-UniRule"/>
</dbReference>
<dbReference type="GO" id="GO:0032259">
    <property type="term" value="P:methylation"/>
    <property type="evidence" value="ECO:0007669"/>
    <property type="project" value="UniProtKB-KW"/>
</dbReference>
<dbReference type="CDD" id="cd03311">
    <property type="entry name" value="CIMS_C_terminal_like"/>
    <property type="match status" value="1"/>
</dbReference>
<dbReference type="CDD" id="cd03312">
    <property type="entry name" value="CIMS_N_terminal_like"/>
    <property type="match status" value="1"/>
</dbReference>
<dbReference type="FunFam" id="3.20.20.210:FF:000002">
    <property type="entry name" value="5-methyltetrahydropteroyltriglutamate--homocysteine methyltransferase"/>
    <property type="match status" value="1"/>
</dbReference>
<dbReference type="FunFam" id="3.20.20.210:FF:000003">
    <property type="entry name" value="5-methyltetrahydropteroyltriglutamate--homocysteine methyltransferase"/>
    <property type="match status" value="1"/>
</dbReference>
<dbReference type="Gene3D" id="3.20.20.210">
    <property type="match status" value="2"/>
</dbReference>
<dbReference type="HAMAP" id="MF_00172">
    <property type="entry name" value="Meth_synth"/>
    <property type="match status" value="1"/>
</dbReference>
<dbReference type="InterPro" id="IPR013215">
    <property type="entry name" value="Cbl-indep_Met_Synth_N"/>
</dbReference>
<dbReference type="InterPro" id="IPR006276">
    <property type="entry name" value="Cobalamin-indep_Met_synthase"/>
</dbReference>
<dbReference type="InterPro" id="IPR002629">
    <property type="entry name" value="Met_Synth_C/arc"/>
</dbReference>
<dbReference type="InterPro" id="IPR038071">
    <property type="entry name" value="UROD/MetE-like_sf"/>
</dbReference>
<dbReference type="NCBIfam" id="TIGR01371">
    <property type="entry name" value="met_syn_B12ind"/>
    <property type="match status" value="1"/>
</dbReference>
<dbReference type="NCBIfam" id="NF003556">
    <property type="entry name" value="PRK05222.1"/>
    <property type="match status" value="1"/>
</dbReference>
<dbReference type="PANTHER" id="PTHR30519">
    <property type="entry name" value="5-METHYLTETRAHYDROPTEROYLTRIGLUTAMATE--HOMOCYSTEINE METHYLTRANSFERASE"/>
    <property type="match status" value="1"/>
</dbReference>
<dbReference type="Pfam" id="PF08267">
    <property type="entry name" value="Meth_synt_1"/>
    <property type="match status" value="1"/>
</dbReference>
<dbReference type="Pfam" id="PF01717">
    <property type="entry name" value="Meth_synt_2"/>
    <property type="match status" value="1"/>
</dbReference>
<dbReference type="PIRSF" id="PIRSF000382">
    <property type="entry name" value="MeTrfase_B12_ind"/>
    <property type="match status" value="1"/>
</dbReference>
<dbReference type="SUPFAM" id="SSF51726">
    <property type="entry name" value="UROD/MetE-like"/>
    <property type="match status" value="2"/>
</dbReference>
<reference key="1">
    <citation type="journal article" date="2009" name="PLoS Genet.">
        <title>Organised genome dynamics in the Escherichia coli species results in highly diverse adaptive paths.</title>
        <authorList>
            <person name="Touchon M."/>
            <person name="Hoede C."/>
            <person name="Tenaillon O."/>
            <person name="Barbe V."/>
            <person name="Baeriswyl S."/>
            <person name="Bidet P."/>
            <person name="Bingen E."/>
            <person name="Bonacorsi S."/>
            <person name="Bouchier C."/>
            <person name="Bouvet O."/>
            <person name="Calteau A."/>
            <person name="Chiapello H."/>
            <person name="Clermont O."/>
            <person name="Cruveiller S."/>
            <person name="Danchin A."/>
            <person name="Diard M."/>
            <person name="Dossat C."/>
            <person name="Karoui M.E."/>
            <person name="Frapy E."/>
            <person name="Garry L."/>
            <person name="Ghigo J.M."/>
            <person name="Gilles A.M."/>
            <person name="Johnson J."/>
            <person name="Le Bouguenec C."/>
            <person name="Lescat M."/>
            <person name="Mangenot S."/>
            <person name="Martinez-Jehanne V."/>
            <person name="Matic I."/>
            <person name="Nassif X."/>
            <person name="Oztas S."/>
            <person name="Petit M.A."/>
            <person name="Pichon C."/>
            <person name="Rouy Z."/>
            <person name="Ruf C.S."/>
            <person name="Schneider D."/>
            <person name="Tourret J."/>
            <person name="Vacherie B."/>
            <person name="Vallenet D."/>
            <person name="Medigue C."/>
            <person name="Rocha E.P.C."/>
            <person name="Denamur E."/>
        </authorList>
    </citation>
    <scope>NUCLEOTIDE SEQUENCE [LARGE SCALE GENOMIC DNA]</scope>
    <source>
        <strain>IAI1</strain>
    </source>
</reference>
<gene>
    <name evidence="1" type="primary">metE</name>
    <name type="ordered locus">ECIAI1_4024</name>
</gene>
<sequence>MTILNHTLGFPRVGLRRELKKAQESYWAGNSTREELLTVGRELRARHWDQQKQAGIDLLPVGDFAWYDHVLTTSLLLGNVPPRHQNKDGSVDIDTLFRIGRGRAPTGEPAAAAEMTKWFNTNYHYMVPEFVKGQQFKLTWTQLLEEVDEALALGHNVKPVLLGPVTYLWLGKVKGEQFDRLSLLNDILPVYQQVLAELAKRGIEWVQIDEPALVLELPQAWLDAYKPAYDALQGQVKLLLTTYFEGVTPNLDTITALPVQGLHVDLVHGKDDVVELHKRLPSDWLLSAGLINGRNVWRADLTEKYAQIKDIVGKRDLWVASSCSLLHSPIDLSVETRLDAEVKSWFAFALQKCHELALLRDALNSGDTAALAEWSAPIQARRHSTRVHNPAVEKRLAAITAQDSQRANVYEVRAEAQRARFKLPAWPTTTIGSFPQTTEIRTLRLDFKKGNLDANNYRTGIAEHIKQAIVEQERLGLDVLVHGEAERNDMVEYFGEHLDGFVFTQNGWVQSYGSRCVKPPIVIGDISRPAPITVEWAKYAQSLTDKPVKGMLTGPVTILCWSFPREDVSRETIAKQIALALRDEVADLEAAGIGIIQIDEPALREGLPLRRSDWDAYLQWGVEAFRINAAVAKDDTQIHTHMCYCEFNDIMDSIAALDADVITIETSRSDMELLESFEEFDYPNEIGPGVYDIHSPNVPSVEWIEALLKKAAKRIPAERLWVNPDCGLKTRGWPETRAALANMVQAAQNLRRG</sequence>
<proteinExistence type="inferred from homology"/>
<organism>
    <name type="scientific">Escherichia coli O8 (strain IAI1)</name>
    <dbReference type="NCBI Taxonomy" id="585034"/>
    <lineage>
        <taxon>Bacteria</taxon>
        <taxon>Pseudomonadati</taxon>
        <taxon>Pseudomonadota</taxon>
        <taxon>Gammaproteobacteria</taxon>
        <taxon>Enterobacterales</taxon>
        <taxon>Enterobacteriaceae</taxon>
        <taxon>Escherichia</taxon>
    </lineage>
</organism>
<feature type="chain" id="PRO_1000191201" description="5-methyltetrahydropteroyltriglutamate--homocysteine methyltransferase">
    <location>
        <begin position="1"/>
        <end position="753"/>
    </location>
</feature>
<feature type="active site" description="Proton donor" evidence="1">
    <location>
        <position position="694"/>
    </location>
</feature>
<feature type="binding site" evidence="1">
    <location>
        <begin position="17"/>
        <end position="20"/>
    </location>
    <ligand>
        <name>5-methyltetrahydropteroyltri-L-glutamate</name>
        <dbReference type="ChEBI" id="CHEBI:58207"/>
    </ligand>
</feature>
<feature type="binding site" evidence="1">
    <location>
        <position position="117"/>
    </location>
    <ligand>
        <name>5-methyltetrahydropteroyltri-L-glutamate</name>
        <dbReference type="ChEBI" id="CHEBI:58207"/>
    </ligand>
</feature>
<feature type="binding site" evidence="1">
    <location>
        <begin position="431"/>
        <end position="433"/>
    </location>
    <ligand>
        <name>L-homocysteine</name>
        <dbReference type="ChEBI" id="CHEBI:58199"/>
    </ligand>
</feature>
<feature type="binding site" evidence="1">
    <location>
        <begin position="431"/>
        <end position="433"/>
    </location>
    <ligand>
        <name>L-methionine</name>
        <dbReference type="ChEBI" id="CHEBI:57844"/>
    </ligand>
</feature>
<feature type="binding site" evidence="1">
    <location>
        <position position="484"/>
    </location>
    <ligand>
        <name>L-homocysteine</name>
        <dbReference type="ChEBI" id="CHEBI:58199"/>
    </ligand>
</feature>
<feature type="binding site" evidence="1">
    <location>
        <position position="484"/>
    </location>
    <ligand>
        <name>L-methionine</name>
        <dbReference type="ChEBI" id="CHEBI:57844"/>
    </ligand>
</feature>
<feature type="binding site" evidence="1">
    <location>
        <begin position="515"/>
        <end position="516"/>
    </location>
    <ligand>
        <name>5-methyltetrahydropteroyltri-L-glutamate</name>
        <dbReference type="ChEBI" id="CHEBI:58207"/>
    </ligand>
</feature>
<feature type="binding site" evidence="1">
    <location>
        <position position="561"/>
    </location>
    <ligand>
        <name>5-methyltetrahydropteroyltri-L-glutamate</name>
        <dbReference type="ChEBI" id="CHEBI:58207"/>
    </ligand>
</feature>
<feature type="binding site" evidence="1">
    <location>
        <position position="599"/>
    </location>
    <ligand>
        <name>L-homocysteine</name>
        <dbReference type="ChEBI" id="CHEBI:58199"/>
    </ligand>
</feature>
<feature type="binding site" evidence="1">
    <location>
        <position position="599"/>
    </location>
    <ligand>
        <name>L-methionine</name>
        <dbReference type="ChEBI" id="CHEBI:57844"/>
    </ligand>
</feature>
<feature type="binding site" evidence="1">
    <location>
        <position position="605"/>
    </location>
    <ligand>
        <name>5-methyltetrahydropteroyltri-L-glutamate</name>
        <dbReference type="ChEBI" id="CHEBI:58207"/>
    </ligand>
</feature>
<feature type="binding site" evidence="1">
    <location>
        <position position="641"/>
    </location>
    <ligand>
        <name>Zn(2+)</name>
        <dbReference type="ChEBI" id="CHEBI:29105"/>
        <note>catalytic</note>
    </ligand>
</feature>
<feature type="binding site" evidence="1">
    <location>
        <position position="643"/>
    </location>
    <ligand>
        <name>Zn(2+)</name>
        <dbReference type="ChEBI" id="CHEBI:29105"/>
        <note>catalytic</note>
    </ligand>
</feature>
<feature type="binding site" evidence="1">
    <location>
        <position position="665"/>
    </location>
    <ligand>
        <name>Zn(2+)</name>
        <dbReference type="ChEBI" id="CHEBI:29105"/>
        <note>catalytic</note>
    </ligand>
</feature>
<feature type="binding site" evidence="1">
    <location>
        <position position="726"/>
    </location>
    <ligand>
        <name>Zn(2+)</name>
        <dbReference type="ChEBI" id="CHEBI:29105"/>
        <note>catalytic</note>
    </ligand>
</feature>
<name>METE_ECO8A</name>
<accession>B7M634</accession>
<keyword id="KW-0028">Amino-acid biosynthesis</keyword>
<keyword id="KW-0479">Metal-binding</keyword>
<keyword id="KW-0486">Methionine biosynthesis</keyword>
<keyword id="KW-0489">Methyltransferase</keyword>
<keyword id="KW-0677">Repeat</keyword>
<keyword id="KW-0808">Transferase</keyword>
<keyword id="KW-0862">Zinc</keyword>
<comment type="function">
    <text evidence="1">Catalyzes the transfer of a methyl group from 5-methyltetrahydrofolate to homocysteine resulting in methionine formation.</text>
</comment>
<comment type="catalytic activity">
    <reaction evidence="1">
        <text>5-methyltetrahydropteroyltri-L-glutamate + L-homocysteine = tetrahydropteroyltri-L-glutamate + L-methionine</text>
        <dbReference type="Rhea" id="RHEA:21196"/>
        <dbReference type="ChEBI" id="CHEBI:57844"/>
        <dbReference type="ChEBI" id="CHEBI:58140"/>
        <dbReference type="ChEBI" id="CHEBI:58199"/>
        <dbReference type="ChEBI" id="CHEBI:58207"/>
        <dbReference type="EC" id="2.1.1.14"/>
    </reaction>
</comment>
<comment type="cofactor">
    <cofactor evidence="1">
        <name>Zn(2+)</name>
        <dbReference type="ChEBI" id="CHEBI:29105"/>
    </cofactor>
    <text evidence="1">Binds 1 zinc ion per subunit.</text>
</comment>
<comment type="pathway">
    <text evidence="1">Amino-acid biosynthesis; L-methionine biosynthesis via de novo pathway; L-methionine from L-homocysteine (MetE route): step 1/1.</text>
</comment>
<comment type="similarity">
    <text evidence="1">Belongs to the vitamin-B12 independent methionine synthase family.</text>
</comment>